<proteinExistence type="inferred from homology"/>
<evidence type="ECO:0000255" key="1">
    <source>
        <dbReference type="HAMAP-Rule" id="MF_00113"/>
    </source>
</evidence>
<gene>
    <name evidence="1" type="primary">queA</name>
    <name type="ordered locus">FP0240</name>
</gene>
<keyword id="KW-0963">Cytoplasm</keyword>
<keyword id="KW-0671">Queuosine biosynthesis</keyword>
<keyword id="KW-1185">Reference proteome</keyword>
<keyword id="KW-0949">S-adenosyl-L-methionine</keyword>
<keyword id="KW-0808">Transferase</keyword>
<comment type="function">
    <text evidence="1">Transfers and isomerizes the ribose moiety from AdoMet to the 7-aminomethyl group of 7-deazaguanine (preQ1-tRNA) to give epoxyqueuosine (oQ-tRNA).</text>
</comment>
<comment type="catalytic activity">
    <reaction evidence="1">
        <text>7-aminomethyl-7-carbaguanosine(34) in tRNA + S-adenosyl-L-methionine = epoxyqueuosine(34) in tRNA + adenine + L-methionine + 2 H(+)</text>
        <dbReference type="Rhea" id="RHEA:32155"/>
        <dbReference type="Rhea" id="RHEA-COMP:10342"/>
        <dbReference type="Rhea" id="RHEA-COMP:18582"/>
        <dbReference type="ChEBI" id="CHEBI:15378"/>
        <dbReference type="ChEBI" id="CHEBI:16708"/>
        <dbReference type="ChEBI" id="CHEBI:57844"/>
        <dbReference type="ChEBI" id="CHEBI:59789"/>
        <dbReference type="ChEBI" id="CHEBI:82833"/>
        <dbReference type="ChEBI" id="CHEBI:194443"/>
        <dbReference type="EC" id="2.4.99.17"/>
    </reaction>
</comment>
<comment type="pathway">
    <text evidence="1">tRNA modification; tRNA-queuosine biosynthesis.</text>
</comment>
<comment type="subunit">
    <text evidence="1">Monomer.</text>
</comment>
<comment type="subcellular location">
    <subcellularLocation>
        <location evidence="1">Cytoplasm</location>
    </subcellularLocation>
</comment>
<comment type="similarity">
    <text evidence="1">Belongs to the QueA family.</text>
</comment>
<sequence>MKLSHFQFNLPDELLAEYPAENRDESRLMVVNRAKGTIEHKMFKDVLDYFDEGDVLVLNNTKVFPARLYGNKEKTGARIEVFLLRELNAEQRLWDVLVDPARKIRIGNKLYFGDDDSLVAEVIDNTTSRGRTLRFLYDGSYEEFRNKLTELGETPIPKYISREVTPEDAERYQTIYAKEEGAVAAPTAGLHFSKHLMKRLEIKGIQFAEVTLHVGLGTFNPVEVEDLSKHKMDSEELKITQEACDIVNAAKERKSRICAVGTTSMRAIESSVSSARTLNPYDGWTNKFIFPPHDFSLATCMITNFHTPKSTLMMMISAFCGHDLMKEAYAEAIKEKYKFYSYGDAMLII</sequence>
<organism>
    <name type="scientific">Flavobacterium psychrophilum (strain ATCC 49511 / DSM 21280 / CIP 103535 / JIP02/86)</name>
    <dbReference type="NCBI Taxonomy" id="402612"/>
    <lineage>
        <taxon>Bacteria</taxon>
        <taxon>Pseudomonadati</taxon>
        <taxon>Bacteroidota</taxon>
        <taxon>Flavobacteriia</taxon>
        <taxon>Flavobacteriales</taxon>
        <taxon>Flavobacteriaceae</taxon>
        <taxon>Flavobacterium</taxon>
    </lineage>
</organism>
<reference key="1">
    <citation type="journal article" date="2007" name="Nat. Biotechnol.">
        <title>Complete genome sequence of the fish pathogen Flavobacterium psychrophilum.</title>
        <authorList>
            <person name="Duchaud E."/>
            <person name="Boussaha M."/>
            <person name="Loux V."/>
            <person name="Bernardet J.-F."/>
            <person name="Michel C."/>
            <person name="Kerouault B."/>
            <person name="Mondot S."/>
            <person name="Nicolas P."/>
            <person name="Bossy R."/>
            <person name="Caron C."/>
            <person name="Bessieres P."/>
            <person name="Gibrat J.-F."/>
            <person name="Claverol S."/>
            <person name="Dumetz F."/>
            <person name="Le Henaff M."/>
            <person name="Benmansour A."/>
        </authorList>
    </citation>
    <scope>NUCLEOTIDE SEQUENCE [LARGE SCALE GENOMIC DNA]</scope>
    <source>
        <strain>ATCC 49511 / DSM 21280 / CIP 103535 / JIP02/86</strain>
    </source>
</reference>
<feature type="chain" id="PRO_1000015214" description="S-adenosylmethionine:tRNA ribosyltransferase-isomerase">
    <location>
        <begin position="1"/>
        <end position="349"/>
    </location>
</feature>
<accession>A6GW82</accession>
<dbReference type="EC" id="2.4.99.17" evidence="1"/>
<dbReference type="EMBL" id="AM398681">
    <property type="protein sequence ID" value="CAL42355.1"/>
    <property type="molecule type" value="Genomic_DNA"/>
</dbReference>
<dbReference type="RefSeq" id="WP_011962415.1">
    <property type="nucleotide sequence ID" value="NC_009613.3"/>
</dbReference>
<dbReference type="RefSeq" id="YP_001295175.1">
    <property type="nucleotide sequence ID" value="NC_009613.3"/>
</dbReference>
<dbReference type="SMR" id="A6GW82"/>
<dbReference type="STRING" id="402612.FP0240"/>
<dbReference type="EnsemblBacteria" id="CAL42355">
    <property type="protein sequence ID" value="CAL42355"/>
    <property type="gene ID" value="FP0240"/>
</dbReference>
<dbReference type="GeneID" id="66553868"/>
<dbReference type="KEGG" id="fps:FP0240"/>
<dbReference type="PATRIC" id="fig|402612.5.peg.248"/>
<dbReference type="eggNOG" id="COG0809">
    <property type="taxonomic scope" value="Bacteria"/>
</dbReference>
<dbReference type="HOGENOM" id="CLU_039110_1_0_10"/>
<dbReference type="OrthoDB" id="9805933at2"/>
<dbReference type="UniPathway" id="UPA00392"/>
<dbReference type="Proteomes" id="UP000006394">
    <property type="component" value="Chromosome"/>
</dbReference>
<dbReference type="GO" id="GO:0005737">
    <property type="term" value="C:cytoplasm"/>
    <property type="evidence" value="ECO:0007669"/>
    <property type="project" value="UniProtKB-SubCell"/>
</dbReference>
<dbReference type="GO" id="GO:0051075">
    <property type="term" value="F:S-adenosylmethionine:tRNA ribosyltransferase-isomerase activity"/>
    <property type="evidence" value="ECO:0007669"/>
    <property type="project" value="UniProtKB-EC"/>
</dbReference>
<dbReference type="GO" id="GO:0008616">
    <property type="term" value="P:queuosine biosynthetic process"/>
    <property type="evidence" value="ECO:0007669"/>
    <property type="project" value="UniProtKB-UniRule"/>
</dbReference>
<dbReference type="GO" id="GO:0002099">
    <property type="term" value="P:tRNA wobble guanine modification"/>
    <property type="evidence" value="ECO:0007669"/>
    <property type="project" value="TreeGrafter"/>
</dbReference>
<dbReference type="FunFam" id="2.40.10.240:FF:000002">
    <property type="entry name" value="S-adenosylmethionine:tRNA ribosyltransferase-isomerase"/>
    <property type="match status" value="1"/>
</dbReference>
<dbReference type="FunFam" id="3.40.1780.10:FF:000001">
    <property type="entry name" value="S-adenosylmethionine:tRNA ribosyltransferase-isomerase"/>
    <property type="match status" value="1"/>
</dbReference>
<dbReference type="Gene3D" id="2.40.10.240">
    <property type="entry name" value="QueA-like"/>
    <property type="match status" value="1"/>
</dbReference>
<dbReference type="Gene3D" id="3.40.1780.10">
    <property type="entry name" value="QueA-like"/>
    <property type="match status" value="1"/>
</dbReference>
<dbReference type="HAMAP" id="MF_00113">
    <property type="entry name" value="QueA"/>
    <property type="match status" value="1"/>
</dbReference>
<dbReference type="InterPro" id="IPR003699">
    <property type="entry name" value="QueA"/>
</dbReference>
<dbReference type="InterPro" id="IPR042118">
    <property type="entry name" value="QueA_dom1"/>
</dbReference>
<dbReference type="InterPro" id="IPR042119">
    <property type="entry name" value="QueA_dom2"/>
</dbReference>
<dbReference type="InterPro" id="IPR036100">
    <property type="entry name" value="QueA_sf"/>
</dbReference>
<dbReference type="NCBIfam" id="NF001140">
    <property type="entry name" value="PRK00147.1"/>
    <property type="match status" value="1"/>
</dbReference>
<dbReference type="NCBIfam" id="TIGR00113">
    <property type="entry name" value="queA"/>
    <property type="match status" value="1"/>
</dbReference>
<dbReference type="PANTHER" id="PTHR30307">
    <property type="entry name" value="S-ADENOSYLMETHIONINE:TRNA RIBOSYLTRANSFERASE-ISOMERASE"/>
    <property type="match status" value="1"/>
</dbReference>
<dbReference type="PANTHER" id="PTHR30307:SF0">
    <property type="entry name" value="S-ADENOSYLMETHIONINE:TRNA RIBOSYLTRANSFERASE-ISOMERASE"/>
    <property type="match status" value="1"/>
</dbReference>
<dbReference type="Pfam" id="PF02547">
    <property type="entry name" value="Queuosine_synth"/>
    <property type="match status" value="1"/>
</dbReference>
<dbReference type="SUPFAM" id="SSF111337">
    <property type="entry name" value="QueA-like"/>
    <property type="match status" value="1"/>
</dbReference>
<protein>
    <recommendedName>
        <fullName evidence="1">S-adenosylmethionine:tRNA ribosyltransferase-isomerase</fullName>
        <ecNumber evidence="1">2.4.99.17</ecNumber>
    </recommendedName>
    <alternativeName>
        <fullName evidence="1">Queuosine biosynthesis protein QueA</fullName>
    </alternativeName>
</protein>
<name>QUEA_FLAPJ</name>